<protein>
    <recommendedName>
        <fullName>Transposase InsC for insertion element IS2-8</fullName>
    </recommendedName>
</protein>
<accession>P0CF47</accession>
<accession>O07989</accession>
<accession>O08018</accession>
<accession>O08019</accession>
<accession>P0C5W2</accession>
<accession>P19776</accession>
<accession>P76357</accession>
<accession>P77346</accession>
<accession>Q2MBI5</accession>
<accession>Q2MC65</accession>
<accession>Q79BJ2</accession>
<accession>Q9JMT0</accession>
<evidence type="ECO:0000305" key="1"/>
<comment type="function">
    <text>Involved in the transposition of the insertion sequence IS2.</text>
</comment>
<comment type="similarity">
    <text evidence="1">Belongs to the transposase 8 family.</text>
</comment>
<comment type="caution">
    <text evidence="1">There is no equivalent of this gene in strain K12 / MG1655.</text>
</comment>
<keyword id="KW-0233">DNA recombination</keyword>
<keyword id="KW-0238">DNA-binding</keyword>
<keyword id="KW-0814">Transposable element</keyword>
<keyword id="KW-0815">Transposition</keyword>
<reference key="1">
    <citation type="journal article" date="2006" name="Mol. Syst. Biol.">
        <title>Highly accurate genome sequences of Escherichia coli K-12 strains MG1655 and W3110.</title>
        <authorList>
            <person name="Hayashi K."/>
            <person name="Morooka N."/>
            <person name="Yamamoto Y."/>
            <person name="Fujita K."/>
            <person name="Isono K."/>
            <person name="Choi S."/>
            <person name="Ohtsubo E."/>
            <person name="Baba T."/>
            <person name="Wanner B.L."/>
            <person name="Mori H."/>
            <person name="Horiuchi T."/>
        </authorList>
    </citation>
    <scope>NUCLEOTIDE SEQUENCE [LARGE SCALE GENOMIC DNA]</scope>
    <source>
        <strain>K12 / W3110 / ATCC 27325 / DSM 5911</strain>
    </source>
</reference>
<name>INSC8_ECOLI</name>
<sequence length="121" mass="13452">MIDVLGPEKRRRRTTQEKIAIVQQSFEPGMTVSLVARQHGVAASQLFLWRKQYQEGSLTAVAAGEQVVPASELAAAMKQIKELQRLLGKKTMENELLKEAVEYGRAKKWIAHAPLLPGDGE</sequence>
<feature type="chain" id="PRO_0000393455" description="Transposase InsC for insertion element IS2-8">
    <location>
        <begin position="1"/>
        <end position="121"/>
    </location>
</feature>
<gene>
    <name type="ordered locus">JW5900</name>
</gene>
<dbReference type="EMBL" id="AP009048">
    <property type="protein sequence ID" value="BAE76371.1"/>
    <property type="molecule type" value="Genomic_DNA"/>
</dbReference>
<dbReference type="SMR" id="P0CF47"/>
<dbReference type="KEGG" id="ecj:JW5900"/>
<dbReference type="KEGG" id="ecoc:C3026_00670"/>
<dbReference type="KEGG" id="ecoc:C3026_03840"/>
<dbReference type="KEGG" id="ecoc:C3026_06235"/>
<dbReference type="KEGG" id="ecoc:C3026_08180"/>
<dbReference type="KEGG" id="ecoc:C3026_09100"/>
<dbReference type="KEGG" id="ecoc:C3026_11265"/>
<dbReference type="KEGG" id="ecoc:C3026_15305"/>
<dbReference type="KEGG" id="ecoc:C3026_15700"/>
<dbReference type="KEGG" id="ecoc:C3026_16625"/>
<dbReference type="KEGG" id="ecoc:C3026_20340"/>
<dbReference type="KEGG" id="ecoc:C3026_23040"/>
<dbReference type="KEGG" id="ecoc:C3026_24220"/>
<dbReference type="HOGENOM" id="CLU_027402_25_0_6"/>
<dbReference type="PhylomeDB" id="P0CF47"/>
<dbReference type="GO" id="GO:0003677">
    <property type="term" value="F:DNA binding"/>
    <property type="evidence" value="ECO:0007669"/>
    <property type="project" value="UniProtKB-KW"/>
</dbReference>
<dbReference type="GO" id="GO:0004803">
    <property type="term" value="F:transposase activity"/>
    <property type="evidence" value="ECO:0007669"/>
    <property type="project" value="InterPro"/>
</dbReference>
<dbReference type="GO" id="GO:0006313">
    <property type="term" value="P:DNA transposition"/>
    <property type="evidence" value="ECO:0007669"/>
    <property type="project" value="InterPro"/>
</dbReference>
<dbReference type="Gene3D" id="1.10.10.10">
    <property type="entry name" value="Winged helix-like DNA-binding domain superfamily/Winged helix DNA-binding domain"/>
    <property type="match status" value="1"/>
</dbReference>
<dbReference type="InterPro" id="IPR009057">
    <property type="entry name" value="Homeodomain-like_sf"/>
</dbReference>
<dbReference type="InterPro" id="IPR002514">
    <property type="entry name" value="Transposase_8"/>
</dbReference>
<dbReference type="InterPro" id="IPR036388">
    <property type="entry name" value="WH-like_DNA-bd_sf"/>
</dbReference>
<dbReference type="NCBIfam" id="NF006928">
    <property type="entry name" value="PRK09413.1"/>
    <property type="match status" value="1"/>
</dbReference>
<dbReference type="PANTHER" id="PTHR37936">
    <property type="entry name" value="TRANSPOSASE INSC FOR INSERTION ELEMENT IS2A-RELATED"/>
    <property type="match status" value="1"/>
</dbReference>
<dbReference type="PANTHER" id="PTHR37936:SF3">
    <property type="entry name" value="TRANSPOSASE INSC FOR INSERTION ELEMENT IS2A-RELATED"/>
    <property type="match status" value="1"/>
</dbReference>
<dbReference type="Pfam" id="PF01527">
    <property type="entry name" value="HTH_Tnp_1"/>
    <property type="match status" value="1"/>
</dbReference>
<dbReference type="SUPFAM" id="SSF46689">
    <property type="entry name" value="Homeodomain-like"/>
    <property type="match status" value="1"/>
</dbReference>
<organism>
    <name type="scientific">Escherichia coli (strain K12)</name>
    <dbReference type="NCBI Taxonomy" id="83333"/>
    <lineage>
        <taxon>Bacteria</taxon>
        <taxon>Pseudomonadati</taxon>
        <taxon>Pseudomonadota</taxon>
        <taxon>Gammaproteobacteria</taxon>
        <taxon>Enterobacterales</taxon>
        <taxon>Enterobacteriaceae</taxon>
        <taxon>Escherichia</taxon>
    </lineage>
</organism>
<proteinExistence type="inferred from homology"/>